<accession>Q94AI6</accession>
<accession>Q8RVQ6</accession>
<accession>Q9M9G4</accession>
<keyword id="KW-0007">Acetylation</keyword>
<keyword id="KW-0025">Alternative splicing</keyword>
<keyword id="KW-1003">Cell membrane</keyword>
<keyword id="KW-0134">Cell wall</keyword>
<keyword id="KW-0963">Cytoplasm</keyword>
<keyword id="KW-0206">Cytoskeleton</keyword>
<keyword id="KW-0268">Exocytosis</keyword>
<keyword id="KW-0472">Membrane</keyword>
<keyword id="KW-1185">Reference proteome</keyword>
<keyword id="KW-0964">Secreted</keyword>
<keyword id="KW-0813">Transport</keyword>
<proteinExistence type="evidence at protein level"/>
<feature type="chain" id="PRO_0000424571" description="Exocyst complex component SEC6">
    <location>
        <begin position="1"/>
        <end position="752"/>
    </location>
</feature>
<feature type="region of interest" description="Disordered" evidence="1">
    <location>
        <begin position="229"/>
        <end position="260"/>
    </location>
</feature>
<feature type="compositionally biased region" description="Low complexity" evidence="1">
    <location>
        <begin position="247"/>
        <end position="256"/>
    </location>
</feature>
<feature type="modified residue" description="N-acetylmethionine" evidence="14">
    <location>
        <position position="1"/>
    </location>
</feature>
<comment type="function">
    <text evidence="4 5 6">Component of the exocyst complex involved in the docking of exocytic vesicles with fusion sites on the plasma membrane during regulated or polarized secretion. Involved in polarized cell growth and organ morphogenesis. During cytokinesis, involved in cell plate initiation, cell plate maturation and formation of new primary cell wall.</text>
</comment>
<comment type="subunit">
    <text evidence="4 6 7 8">The exocyst complex is composed of SEC3, SEC5, SEC6, SEC8, SEC10, EXO70A1 and EXO84B. Interacts with EXO84B and KEU (via C-terminus). Binds to EXO70E2 (PubMed:24307681). Binds directly to B1L (PubMed:35249253).</text>
</comment>
<comment type="interaction">
    <interactant intactId="EBI-1797182">
        <id>Q94AI6</id>
    </interactant>
    <interactant intactId="EBI-1797218">
        <id>Q9LZD3</id>
        <label>EXO70A1</label>
    </interactant>
    <organismsDiffer>false</organismsDiffer>
    <experiments>3</experiments>
</comment>
<comment type="subcellular location">
    <subcellularLocation>
        <location evidence="3 5 7">Cytoplasm</location>
        <location evidence="3 5 7">Cytosol</location>
    </subcellularLocation>
    <subcellularLocation>
        <location evidence="5">Cell membrane</location>
    </subcellularLocation>
    <subcellularLocation>
        <location evidence="4 6">Cytoplasm</location>
        <location evidence="4 6">Cytoskeleton</location>
        <location evidence="4 6">Phragmoplast</location>
    </subcellularLocation>
    <subcellularLocation>
        <location evidence="4">Secreted</location>
        <location evidence="4">Cell wall</location>
    </subcellularLocation>
    <subcellularLocation>
        <location evidence="7">Secreted</location>
        <location evidence="7">Extracellular exosome</location>
    </subcellularLocation>
    <text evidence="4 7">During cytokinesis, localizes to the nascent cell plate and later to the cell plate insertion site and along the post-cytokinetic wall (PubMed:20870962). Shuttles from the cytoplasm to the exocyst-positive organelle (EXPO) in the presence of EXO70E2 (PubMed:24307681).</text>
</comment>
<comment type="alternative products">
    <event type="alternative splicing"/>
    <isoform>
        <id>Q94AI6-1</id>
        <name>1</name>
        <sequence type="displayed"/>
    </isoform>
    <text>A number of isoforms are produced. According to EST sequences.</text>
</comment>
<comment type="disruption phenotype">
    <text evidence="2 6">Male gametophytic lethal due to defect in pollen germination and pollen tube growth.</text>
</comment>
<comment type="similarity">
    <text evidence="11">Belongs to the SEC6 family.</text>
</comment>
<comment type="sequence caution" evidence="11">
    <conflict type="erroneous gene model prediction">
        <sequence resource="EMBL-CDS" id="AAF43235"/>
    </conflict>
</comment>
<comment type="sequence caution" evidence="11">
    <conflict type="erroneous initiation">
        <sequence resource="EMBL-CDS" id="AAL87122"/>
    </conflict>
    <text>Truncated N-terminus.</text>
</comment>
<protein>
    <recommendedName>
        <fullName evidence="9 10">Exocyst complex component SEC6</fullName>
        <shortName evidence="9 10">AtSec6</shortName>
    </recommendedName>
</protein>
<evidence type="ECO:0000256" key="1">
    <source>
        <dbReference type="SAM" id="MobiDB-lite"/>
    </source>
</evidence>
<evidence type="ECO:0000269" key="2">
    <source>
    </source>
</evidence>
<evidence type="ECO:0000269" key="3">
    <source>
    </source>
</evidence>
<evidence type="ECO:0000269" key="4">
    <source>
    </source>
</evidence>
<evidence type="ECO:0000269" key="5">
    <source>
    </source>
</evidence>
<evidence type="ECO:0000269" key="6">
    <source>
    </source>
</evidence>
<evidence type="ECO:0000269" key="7">
    <source>
    </source>
</evidence>
<evidence type="ECO:0000269" key="8">
    <source>
    </source>
</evidence>
<evidence type="ECO:0000303" key="9">
    <source>
    </source>
</evidence>
<evidence type="ECO:0000303" key="10">
    <source>
    </source>
</evidence>
<evidence type="ECO:0000305" key="11"/>
<evidence type="ECO:0000312" key="12">
    <source>
        <dbReference type="Araport" id="AT1G71820"/>
    </source>
</evidence>
<evidence type="ECO:0000312" key="13">
    <source>
        <dbReference type="EMBL" id="AAF43235.1"/>
    </source>
</evidence>
<evidence type="ECO:0007744" key="14">
    <source>
    </source>
</evidence>
<gene>
    <name evidence="9 10" type="primary">SEC6</name>
    <name evidence="12" type="ordered locus">At1g71820</name>
    <name evidence="13" type="ORF">F14O23.20</name>
</gene>
<organism>
    <name type="scientific">Arabidopsis thaliana</name>
    <name type="common">Mouse-ear cress</name>
    <dbReference type="NCBI Taxonomy" id="3702"/>
    <lineage>
        <taxon>Eukaryota</taxon>
        <taxon>Viridiplantae</taxon>
        <taxon>Streptophyta</taxon>
        <taxon>Embryophyta</taxon>
        <taxon>Tracheophyta</taxon>
        <taxon>Spermatophyta</taxon>
        <taxon>Magnoliopsida</taxon>
        <taxon>eudicotyledons</taxon>
        <taxon>Gunneridae</taxon>
        <taxon>Pentapetalae</taxon>
        <taxon>rosids</taxon>
        <taxon>malvids</taxon>
        <taxon>Brassicales</taxon>
        <taxon>Brassicaceae</taxon>
        <taxon>Camelineae</taxon>
        <taxon>Arabidopsis</taxon>
    </lineage>
</organism>
<name>SEC6_ARATH</name>
<reference key="1">
    <citation type="submission" date="2002-02" db="EMBL/GenBank/DDBJ databases">
        <title>Molecular characterization of the exocyst complex in Arabidopsis thaliana.</title>
        <authorList>
            <person name="Elias M."/>
            <person name="Cvrckova F."/>
            <person name="Zarsky V."/>
        </authorList>
    </citation>
    <scope>NUCLEOTIDE SEQUENCE [MRNA]</scope>
    <source>
        <strain>cv. Columbia</strain>
    </source>
</reference>
<reference key="2">
    <citation type="journal article" date="2000" name="Nature">
        <title>Sequence and analysis of chromosome 1 of the plant Arabidopsis thaliana.</title>
        <authorList>
            <person name="Theologis A."/>
            <person name="Ecker J.R."/>
            <person name="Palm C.J."/>
            <person name="Federspiel N.A."/>
            <person name="Kaul S."/>
            <person name="White O."/>
            <person name="Alonso J."/>
            <person name="Altafi H."/>
            <person name="Araujo R."/>
            <person name="Bowman C.L."/>
            <person name="Brooks S.Y."/>
            <person name="Buehler E."/>
            <person name="Chan A."/>
            <person name="Chao Q."/>
            <person name="Chen H."/>
            <person name="Cheuk R.F."/>
            <person name="Chin C.W."/>
            <person name="Chung M.K."/>
            <person name="Conn L."/>
            <person name="Conway A.B."/>
            <person name="Conway A.R."/>
            <person name="Creasy T.H."/>
            <person name="Dewar K."/>
            <person name="Dunn P."/>
            <person name="Etgu P."/>
            <person name="Feldblyum T.V."/>
            <person name="Feng J.-D."/>
            <person name="Fong B."/>
            <person name="Fujii C.Y."/>
            <person name="Gill J.E."/>
            <person name="Goldsmith A.D."/>
            <person name="Haas B."/>
            <person name="Hansen N.F."/>
            <person name="Hughes B."/>
            <person name="Huizar L."/>
            <person name="Hunter J.L."/>
            <person name="Jenkins J."/>
            <person name="Johnson-Hopson C."/>
            <person name="Khan S."/>
            <person name="Khaykin E."/>
            <person name="Kim C.J."/>
            <person name="Koo H.L."/>
            <person name="Kremenetskaia I."/>
            <person name="Kurtz D.B."/>
            <person name="Kwan A."/>
            <person name="Lam B."/>
            <person name="Langin-Hooper S."/>
            <person name="Lee A."/>
            <person name="Lee J.M."/>
            <person name="Lenz C.A."/>
            <person name="Li J.H."/>
            <person name="Li Y.-P."/>
            <person name="Lin X."/>
            <person name="Liu S.X."/>
            <person name="Liu Z.A."/>
            <person name="Luros J.S."/>
            <person name="Maiti R."/>
            <person name="Marziali A."/>
            <person name="Militscher J."/>
            <person name="Miranda M."/>
            <person name="Nguyen M."/>
            <person name="Nierman W.C."/>
            <person name="Osborne B.I."/>
            <person name="Pai G."/>
            <person name="Peterson J."/>
            <person name="Pham P.K."/>
            <person name="Rizzo M."/>
            <person name="Rooney T."/>
            <person name="Rowley D."/>
            <person name="Sakano H."/>
            <person name="Salzberg S.L."/>
            <person name="Schwartz J.R."/>
            <person name="Shinn P."/>
            <person name="Southwick A.M."/>
            <person name="Sun H."/>
            <person name="Tallon L.J."/>
            <person name="Tambunga G."/>
            <person name="Toriumi M.J."/>
            <person name="Town C.D."/>
            <person name="Utterback T."/>
            <person name="Van Aken S."/>
            <person name="Vaysberg M."/>
            <person name="Vysotskaia V.S."/>
            <person name="Walker M."/>
            <person name="Wu D."/>
            <person name="Yu G."/>
            <person name="Fraser C.M."/>
            <person name="Venter J.C."/>
            <person name="Davis R.W."/>
        </authorList>
    </citation>
    <scope>NUCLEOTIDE SEQUENCE [LARGE SCALE GENOMIC DNA]</scope>
    <source>
        <strain>cv. Columbia</strain>
    </source>
</reference>
<reference key="3">
    <citation type="journal article" date="2017" name="Plant J.">
        <title>Araport11: a complete reannotation of the Arabidopsis thaliana reference genome.</title>
        <authorList>
            <person name="Cheng C.Y."/>
            <person name="Krishnakumar V."/>
            <person name="Chan A.P."/>
            <person name="Thibaud-Nissen F."/>
            <person name="Schobel S."/>
            <person name="Town C.D."/>
        </authorList>
    </citation>
    <scope>GENOME REANNOTATION</scope>
    <source>
        <strain>cv. Columbia</strain>
    </source>
</reference>
<reference key="4">
    <citation type="journal article" date="2003" name="Science">
        <title>Empirical analysis of transcriptional activity in the Arabidopsis genome.</title>
        <authorList>
            <person name="Yamada K."/>
            <person name="Lim J."/>
            <person name="Dale J.M."/>
            <person name="Chen H."/>
            <person name="Shinn P."/>
            <person name="Palm C.J."/>
            <person name="Southwick A.M."/>
            <person name="Wu H.C."/>
            <person name="Kim C.J."/>
            <person name="Nguyen M."/>
            <person name="Pham P.K."/>
            <person name="Cheuk R.F."/>
            <person name="Karlin-Newmann G."/>
            <person name="Liu S.X."/>
            <person name="Lam B."/>
            <person name="Sakano H."/>
            <person name="Wu T."/>
            <person name="Yu G."/>
            <person name="Miranda M."/>
            <person name="Quach H.L."/>
            <person name="Tripp M."/>
            <person name="Chang C.H."/>
            <person name="Lee J.M."/>
            <person name="Toriumi M.J."/>
            <person name="Chan M.M."/>
            <person name="Tang C.C."/>
            <person name="Onodera C.S."/>
            <person name="Deng J.M."/>
            <person name="Akiyama K."/>
            <person name="Ansari Y."/>
            <person name="Arakawa T."/>
            <person name="Banh J."/>
            <person name="Banno F."/>
            <person name="Bowser L."/>
            <person name="Brooks S.Y."/>
            <person name="Carninci P."/>
            <person name="Chao Q."/>
            <person name="Choy N."/>
            <person name="Enju A."/>
            <person name="Goldsmith A.D."/>
            <person name="Gurjal M."/>
            <person name="Hansen N.F."/>
            <person name="Hayashizaki Y."/>
            <person name="Johnson-Hopson C."/>
            <person name="Hsuan V.W."/>
            <person name="Iida K."/>
            <person name="Karnes M."/>
            <person name="Khan S."/>
            <person name="Koesema E."/>
            <person name="Ishida J."/>
            <person name="Jiang P.X."/>
            <person name="Jones T."/>
            <person name="Kawai J."/>
            <person name="Kamiya A."/>
            <person name="Meyers C."/>
            <person name="Nakajima M."/>
            <person name="Narusaka M."/>
            <person name="Seki M."/>
            <person name="Sakurai T."/>
            <person name="Satou M."/>
            <person name="Tamse R."/>
            <person name="Vaysberg M."/>
            <person name="Wallender E.K."/>
            <person name="Wong C."/>
            <person name="Yamamura Y."/>
            <person name="Yuan S."/>
            <person name="Shinozaki K."/>
            <person name="Davis R.W."/>
            <person name="Theologis A."/>
            <person name="Ecker J.R."/>
        </authorList>
    </citation>
    <scope>NUCLEOTIDE SEQUENCE [LARGE SCALE MRNA]</scope>
    <source>
        <strain>cv. Columbia</strain>
    </source>
</reference>
<reference key="5">
    <citation type="journal article" date="2008" name="Plant Cell">
        <title>An exocyst complex functions in plant cell growth in Arabidopsis and tobacco.</title>
        <authorList>
            <person name="Hala M."/>
            <person name="Cole R."/>
            <person name="Synek L."/>
            <person name="Drdova E."/>
            <person name="Pecenkova T."/>
            <person name="Nordheim A."/>
            <person name="Lamkemeyer T."/>
            <person name="Madlung J."/>
            <person name="Hochholdinger F."/>
            <person name="Fowler J.E."/>
            <person name="Zarsky V."/>
        </authorList>
    </citation>
    <scope>COMPONENT OF THE EXOCYST COMPLEX</scope>
    <scope>DISRUPTION PHENOTYPE</scope>
</reference>
<reference key="6">
    <citation type="journal article" date="2010" name="New Phytol.">
        <title>Characterization of the Arabidopsis thaliana exocyst complex gene families by phylogenetic, expression profiling, and subcellular localization studies.</title>
        <authorList>
            <person name="Chong Y.T."/>
            <person name="Gidda S.K."/>
            <person name="Sanford C."/>
            <person name="Parkinson J."/>
            <person name="Mullen R.T."/>
            <person name="Goring D.R."/>
        </authorList>
    </citation>
    <scope>GENE FAMILY</scope>
    <scope>NOMENCLATURE</scope>
    <scope>SUBCELLULAR LOCATION</scope>
</reference>
<reference key="7">
    <citation type="journal article" date="2010" name="Plant Cell">
        <title>The Arabidopsis exocyst complex is involved in cytokinesis and cell plate maturation.</title>
        <authorList>
            <person name="Fendrych M."/>
            <person name="Synek L."/>
            <person name="Pecenkova T."/>
            <person name="Toupalova H."/>
            <person name="Cole R."/>
            <person name="Drdova E."/>
            <person name="Nebesarova J."/>
            <person name="Sedinova M."/>
            <person name="Hala M."/>
            <person name="Fowler J.E."/>
            <person name="Zarsky V."/>
        </authorList>
    </citation>
    <scope>FUNCTION</scope>
    <scope>INTERACTION WITH EXO84B</scope>
    <scope>SUBCELLULAR LOCATION</scope>
</reference>
<reference key="8">
    <citation type="journal article" date="2012" name="Mol. Cell. Proteomics">
        <title>Comparative large-scale characterisation of plant vs. mammal proteins reveals similar and idiosyncratic N-alpha acetylation features.</title>
        <authorList>
            <person name="Bienvenut W.V."/>
            <person name="Sumpton D."/>
            <person name="Martinez A."/>
            <person name="Lilla S."/>
            <person name="Espagne C."/>
            <person name="Meinnel T."/>
            <person name="Giglione C."/>
        </authorList>
    </citation>
    <scope>ACETYLATION [LARGE SCALE ANALYSIS] AT MET-1</scope>
    <scope>IDENTIFICATION BY MASS SPECTROMETRY [LARGE SCALE ANALYSIS]</scope>
</reference>
<reference key="9">
    <citation type="journal article" date="2013" name="Mol. Biol. Cell">
        <title>Visualization of the exocyst complex dynamics at the plasma membrane of Arabidopsis thaliana.</title>
        <authorList>
            <person name="Fendrych M."/>
            <person name="Synek L."/>
            <person name="Pecenkova T."/>
            <person name="Drdova E.J."/>
            <person name="Sekeres J."/>
            <person name="de Rycke R."/>
            <person name="Nowack M.K."/>
            <person name="Zarsky V."/>
        </authorList>
    </citation>
    <scope>FUNCTION</scope>
    <scope>SUBCELLULAR LOCATION</scope>
</reference>
<reference key="10">
    <citation type="journal article" date="2013" name="Mol. Plant">
        <title>Regulation of cytokinesis by exocyst subunit SEC6 and KEULE in Arabidopsis thaliana.</title>
        <authorList>
            <person name="Wu J."/>
            <person name="Tan X."/>
            <person name="Wu C."/>
            <person name="Cao K."/>
            <person name="Li Y."/>
            <person name="Bao Y."/>
        </authorList>
    </citation>
    <scope>FUNCTION</scope>
    <scope>INTERACTION WITH KEU</scope>
    <scope>SUBCELLULAR LOCATION</scope>
    <scope>DISRUPTION PHENOTYPE</scope>
</reference>
<reference key="11">
    <citation type="journal article" date="2014" name="Mol. Biol. Cell">
        <title>Exo70E2 is essential for exocyst subunit recruitment and EXPO formation in both plants and animals.</title>
        <authorList>
            <person name="Ding Y."/>
            <person name="Wang J."/>
            <person name="Chun Lai J.H."/>
            <person name="Ling Chan V.H."/>
            <person name="Wang X."/>
            <person name="Cai Y."/>
            <person name="Tan X."/>
            <person name="Bao Y."/>
            <person name="Xia J."/>
            <person name="Robinson D.G."/>
            <person name="Jiang L."/>
        </authorList>
    </citation>
    <scope>INTERACTION WITH EXO70E2</scope>
    <scope>SUBCELLULAR LOCATION</scope>
    <source>
        <strain>cv. Columbia</strain>
    </source>
</reference>
<reference key="12">
    <citation type="journal article" date="2022" name="J. Integr. Plant Biol.">
        <title>BYPASS1-LIKE regulates lateral root initiation via exocytic vesicular trafficking-mediated PIN recycling in Arabidopsis.</title>
        <authorList>
            <person name="Yang G."/>
            <person name="Chen B.-X."/>
            <person name="Chen T."/>
            <person name="Chen J.-H."/>
            <person name="Lin X.-Y."/>
            <person name="Yue X.-L."/>
            <person name="An L.-Z."/>
            <person name="Zhang H."/>
        </authorList>
    </citation>
    <scope>INTERACTION WITH B1L</scope>
    <source>
        <strain>cv. Columbia</strain>
    </source>
</reference>
<dbReference type="EMBL" id="AF479279">
    <property type="protein sequence ID" value="AAL87122.1"/>
    <property type="status" value="ALT_INIT"/>
    <property type="molecule type" value="mRNA"/>
</dbReference>
<dbReference type="EMBL" id="AC012654">
    <property type="protein sequence ID" value="AAF43235.1"/>
    <property type="status" value="ALT_SEQ"/>
    <property type="molecule type" value="Genomic_DNA"/>
</dbReference>
<dbReference type="EMBL" id="CP002684">
    <property type="protein sequence ID" value="AEE35236.1"/>
    <property type="molecule type" value="Genomic_DNA"/>
</dbReference>
<dbReference type="EMBL" id="AY046014">
    <property type="protein sequence ID" value="AAK76688.1"/>
    <property type="molecule type" value="mRNA"/>
</dbReference>
<dbReference type="EMBL" id="AY133819">
    <property type="protein sequence ID" value="AAM91753.1"/>
    <property type="molecule type" value="mRNA"/>
</dbReference>
<dbReference type="PIR" id="G96740">
    <property type="entry name" value="G96740"/>
</dbReference>
<dbReference type="RefSeq" id="NP_565026.1">
    <molecule id="Q94AI6-1"/>
    <property type="nucleotide sequence ID" value="NM_105840.4"/>
</dbReference>
<dbReference type="SMR" id="Q94AI6"/>
<dbReference type="BioGRID" id="28732">
    <property type="interactions" value="7"/>
</dbReference>
<dbReference type="FunCoup" id="Q94AI6">
    <property type="interactions" value="3957"/>
</dbReference>
<dbReference type="IntAct" id="Q94AI6">
    <property type="interactions" value="3"/>
</dbReference>
<dbReference type="STRING" id="3702.Q94AI6"/>
<dbReference type="TCDB" id="1.F.2.1.3">
    <property type="family name" value="the octameric exocyst (exocyst) family"/>
</dbReference>
<dbReference type="iPTMnet" id="Q94AI6"/>
<dbReference type="PaxDb" id="3702-AT1G71820.2"/>
<dbReference type="ProteomicsDB" id="232782">
    <molecule id="Q94AI6-1"/>
</dbReference>
<dbReference type="EnsemblPlants" id="AT1G71820.1">
    <molecule id="Q94AI6-1"/>
    <property type="protein sequence ID" value="AT1G71820.1"/>
    <property type="gene ID" value="AT1G71820"/>
</dbReference>
<dbReference type="GeneID" id="843512"/>
<dbReference type="Gramene" id="AT1G71820.1">
    <molecule id="Q94AI6-1"/>
    <property type="protein sequence ID" value="AT1G71820.1"/>
    <property type="gene ID" value="AT1G71820"/>
</dbReference>
<dbReference type="KEGG" id="ath:AT1G71820"/>
<dbReference type="Araport" id="AT1G71820"/>
<dbReference type="TAIR" id="AT1G71820">
    <property type="gene designation" value="SEC6"/>
</dbReference>
<dbReference type="eggNOG" id="KOG2286">
    <property type="taxonomic scope" value="Eukaryota"/>
</dbReference>
<dbReference type="HOGENOM" id="CLU_011776_1_0_1"/>
<dbReference type="InParanoid" id="Q94AI6"/>
<dbReference type="OMA" id="MNIGPKT"/>
<dbReference type="OrthoDB" id="190098at2759"/>
<dbReference type="PhylomeDB" id="Q94AI6"/>
<dbReference type="PRO" id="PR:Q94AI6"/>
<dbReference type="Proteomes" id="UP000006548">
    <property type="component" value="Chromosome 1"/>
</dbReference>
<dbReference type="ExpressionAtlas" id="Q94AI6">
    <property type="expression patterns" value="baseline and differential"/>
</dbReference>
<dbReference type="GO" id="GO:0005856">
    <property type="term" value="C:cytoskeleton"/>
    <property type="evidence" value="ECO:0007669"/>
    <property type="project" value="UniProtKB-KW"/>
</dbReference>
<dbReference type="GO" id="GO:0005829">
    <property type="term" value="C:cytosol"/>
    <property type="evidence" value="ECO:0000314"/>
    <property type="project" value="UniProtKB"/>
</dbReference>
<dbReference type="GO" id="GO:0000145">
    <property type="term" value="C:exocyst"/>
    <property type="evidence" value="ECO:0007669"/>
    <property type="project" value="InterPro"/>
</dbReference>
<dbReference type="GO" id="GO:0070062">
    <property type="term" value="C:extracellular exosome"/>
    <property type="evidence" value="ECO:0000314"/>
    <property type="project" value="UniProtKB"/>
</dbReference>
<dbReference type="GO" id="GO:0009524">
    <property type="term" value="C:phragmoplast"/>
    <property type="evidence" value="ECO:0007669"/>
    <property type="project" value="UniProtKB-SubCell"/>
</dbReference>
<dbReference type="GO" id="GO:0005886">
    <property type="term" value="C:plasma membrane"/>
    <property type="evidence" value="ECO:0007669"/>
    <property type="project" value="UniProtKB-SubCell"/>
</dbReference>
<dbReference type="GO" id="GO:0006887">
    <property type="term" value="P:exocytosis"/>
    <property type="evidence" value="ECO:0007669"/>
    <property type="project" value="UniProtKB-KW"/>
</dbReference>
<dbReference type="FunFam" id="1.10.357.50:FF:000003">
    <property type="entry name" value="Exocyst complex component SEC6"/>
    <property type="match status" value="1"/>
</dbReference>
<dbReference type="FunFam" id="1.10.357.70:FF:000002">
    <property type="entry name" value="Exocyst complex component SEC6"/>
    <property type="match status" value="1"/>
</dbReference>
<dbReference type="Gene3D" id="1.10.357.50">
    <property type="match status" value="1"/>
</dbReference>
<dbReference type="Gene3D" id="1.10.357.70">
    <property type="entry name" value="Exocyst complex component Sec6, C-terminal domain"/>
    <property type="match status" value="1"/>
</dbReference>
<dbReference type="InterPro" id="IPR010326">
    <property type="entry name" value="EXOC3/Sec6"/>
</dbReference>
<dbReference type="InterPro" id="IPR042532">
    <property type="entry name" value="EXOC3/Sec6_C"/>
</dbReference>
<dbReference type="PANTHER" id="PTHR21292:SF1">
    <property type="entry name" value="EXOCYST COMPLEX COMPONENT 3"/>
    <property type="match status" value="1"/>
</dbReference>
<dbReference type="PANTHER" id="PTHR21292">
    <property type="entry name" value="EXOCYST COMPLEX COMPONENT SEC6-RELATED"/>
    <property type="match status" value="1"/>
</dbReference>
<dbReference type="Pfam" id="PF06046">
    <property type="entry name" value="Sec6"/>
    <property type="match status" value="1"/>
</dbReference>
<sequence length="752" mass="85674">MMVEDLGVEAKEAAVREVAKLLPLPELLQSISSIKADYIARQQANDAQLSTMVAEQVEQAQAGLESLSSSEKTIYELRDNFISIDKLCQECQTLIDNHDQIKLLSNARNNLNKTLKDVEGMMSISVEAAAARDSLSDDKEIVNTYERLTALDGKRRFALAAAGEEVGRLREYFEDVDRTWETFEKTLWGHVSNYYKLSKESPQTLVRALRVVEMQEILDQQLAEEAAEAEGEGAMASVANPRRPGKKSTTTSASSKGLAQQKLKVQGKGYKDKCYEQIRKAVEDRFNRLLTLVFEDLKAALEEARMIGEELGDIYDYVAPCFPPRYEIFQLMVNLYTERFIQMLRLLSDRANDLTNIEILKVTGWVVEYQENLIALGVDDSLAQVCSESGSMDPLMNAYVERMQATTKKWYMNILEADKVQPPKKTEEGKLYTPAAVDLFRILGEQVQIVRDNSTDVMLYRIALAIIQVMIDFQAAEKKRVDEPASDIGLEPLCAMINNNLRCYDLAMELSNSTLEALPQNYAEQVNFEDTCKGFLEVAKEAVHQTVRVIFEDPGVQELLVKLYQKEWCEGQVTEYLVATFGDYFTDVKMYVEERSFRRFVEACLEETVVVYVDHLLTQKNYIKEETIERMRLDEEVLMDFFREYISASKVESRIRIMSDLRELASAESLDAFTLVYSNILEHQPDCPAEVVEKLVSLREGIPRKDTKEVVQECKEIYENTLVDGNPPKTGFVFPRVKCLTASKGSMWRKLT</sequence>